<keyword id="KW-0002">3D-structure</keyword>
<keyword id="KW-0963">Cytoplasm</keyword>
<keyword id="KW-0342">GTP-binding</keyword>
<keyword id="KW-0378">Hydrolase</keyword>
<keyword id="KW-0460">Magnesium</keyword>
<keyword id="KW-0479">Metal-binding</keyword>
<keyword id="KW-0547">Nucleotide-binding</keyword>
<keyword id="KW-0630">Potassium</keyword>
<keyword id="KW-1185">Reference proteome</keyword>
<keyword id="KW-0819">tRNA processing</keyword>
<gene>
    <name evidence="1" type="primary">mnmE</name>
    <name evidence="1" type="synonym">trmE</name>
    <name type="ordered locus">all4677</name>
</gene>
<sequence length="459" mass="49783">MAITGTIAAIATAIVPQQGSVGIVRVSGSQAIAIAQTLFDAPGKQVWESHRILYGYIRHPQTRQIVDEALLLLMKAPRSYTREDVVEFHCHGGIIAVQQVLQLCLESGARLAQPGEFTLRAFLNGRLDLTQAESIADLVGARSPQAAQTALAGLQGKLAHPIRQLRANCLDILAEIEARIDFEEDLPPLDDEAIISDIENIAAEISQLLATKDKGELLRTGLKVAIVGRPNVGKSSLLNAWSQSDRAIVTDLPGTTRDVVESQLVVGGIPVQVLDTAGIRETSDQVEKIGVERSRQAANTADLVLLTIDAATGWTTGDQEIYEQVKHRPLILVMNKIDLVEKQLITSLEYPENITQIVHTAAAQKQGIDSLETAILEIVQTGKVQAADMDLAINQRQAAALTQAKMSLEQVQATITQQLPLDFWTIDLRGAIQALGEITGEEVTESVLDRIFSRFCIGK</sequence>
<feature type="chain" id="PRO_0000188845" description="tRNA modification GTPase MnmE">
    <location>
        <begin position="1"/>
        <end position="459"/>
    </location>
</feature>
<feature type="domain" description="TrmE-type G">
    <location>
        <begin position="221"/>
        <end position="380"/>
    </location>
</feature>
<feature type="binding site" evidence="1">
    <location>
        <position position="25"/>
    </location>
    <ligand>
        <name>(6S)-5-formyl-5,6,7,8-tetrahydrofolate</name>
        <dbReference type="ChEBI" id="CHEBI:57457"/>
    </ligand>
</feature>
<feature type="binding site" evidence="1">
    <location>
        <position position="87"/>
    </location>
    <ligand>
        <name>(6S)-5-formyl-5,6,7,8-tetrahydrofolate</name>
        <dbReference type="ChEBI" id="CHEBI:57457"/>
    </ligand>
</feature>
<feature type="binding site" evidence="1">
    <location>
        <position position="126"/>
    </location>
    <ligand>
        <name>(6S)-5-formyl-5,6,7,8-tetrahydrofolate</name>
        <dbReference type="ChEBI" id="CHEBI:57457"/>
    </ligand>
</feature>
<feature type="binding site" evidence="1">
    <location>
        <begin position="231"/>
        <end position="236"/>
    </location>
    <ligand>
        <name>GTP</name>
        <dbReference type="ChEBI" id="CHEBI:37565"/>
    </ligand>
</feature>
<feature type="binding site" evidence="1">
    <location>
        <position position="231"/>
    </location>
    <ligand>
        <name>K(+)</name>
        <dbReference type="ChEBI" id="CHEBI:29103"/>
    </ligand>
</feature>
<feature type="binding site" evidence="1">
    <location>
        <position position="235"/>
    </location>
    <ligand>
        <name>Mg(2+)</name>
        <dbReference type="ChEBI" id="CHEBI:18420"/>
    </ligand>
</feature>
<feature type="binding site" evidence="1">
    <location>
        <begin position="250"/>
        <end position="256"/>
    </location>
    <ligand>
        <name>GTP</name>
        <dbReference type="ChEBI" id="CHEBI:37565"/>
    </ligand>
</feature>
<feature type="binding site" evidence="1">
    <location>
        <position position="250"/>
    </location>
    <ligand>
        <name>K(+)</name>
        <dbReference type="ChEBI" id="CHEBI:29103"/>
    </ligand>
</feature>
<feature type="binding site" evidence="1">
    <location>
        <position position="252"/>
    </location>
    <ligand>
        <name>K(+)</name>
        <dbReference type="ChEBI" id="CHEBI:29103"/>
    </ligand>
</feature>
<feature type="binding site" evidence="1">
    <location>
        <position position="255"/>
    </location>
    <ligand>
        <name>K(+)</name>
        <dbReference type="ChEBI" id="CHEBI:29103"/>
    </ligand>
</feature>
<feature type="binding site" evidence="1">
    <location>
        <position position="256"/>
    </location>
    <ligand>
        <name>Mg(2+)</name>
        <dbReference type="ChEBI" id="CHEBI:18420"/>
    </ligand>
</feature>
<feature type="binding site" evidence="1">
    <location>
        <begin position="275"/>
        <end position="278"/>
    </location>
    <ligand>
        <name>GTP</name>
        <dbReference type="ChEBI" id="CHEBI:37565"/>
    </ligand>
</feature>
<feature type="binding site" evidence="1">
    <location>
        <position position="459"/>
    </location>
    <ligand>
        <name>(6S)-5-formyl-5,6,7,8-tetrahydrofolate</name>
        <dbReference type="ChEBI" id="CHEBI:57457"/>
    </ligand>
</feature>
<feature type="strand" evidence="2">
    <location>
        <begin position="7"/>
        <end position="10"/>
    </location>
</feature>
<feature type="strand" evidence="2">
    <location>
        <begin position="22"/>
        <end position="28"/>
    </location>
</feature>
<feature type="helix" evidence="2">
    <location>
        <begin position="31"/>
        <end position="38"/>
    </location>
</feature>
<feature type="strand" evidence="2">
    <location>
        <begin position="51"/>
        <end position="57"/>
    </location>
</feature>
<feature type="strand" evidence="2">
    <location>
        <begin position="60"/>
        <end position="62"/>
    </location>
</feature>
<feature type="strand" evidence="2">
    <location>
        <begin position="67"/>
        <end position="74"/>
    </location>
</feature>
<feature type="strand" evidence="2">
    <location>
        <begin position="79"/>
        <end position="83"/>
    </location>
</feature>
<feature type="strand" evidence="2">
    <location>
        <begin position="85"/>
        <end position="90"/>
    </location>
</feature>
<feature type="strand" evidence="2">
    <location>
        <begin position="93"/>
        <end position="95"/>
    </location>
</feature>
<feature type="helix" evidence="2">
    <location>
        <begin position="96"/>
        <end position="106"/>
    </location>
</feature>
<feature type="helix" evidence="2">
    <location>
        <begin position="116"/>
        <end position="123"/>
    </location>
</feature>
<feature type="helix" evidence="2">
    <location>
        <begin position="129"/>
        <end position="140"/>
    </location>
</feature>
<feature type="helix" evidence="2">
    <location>
        <begin position="144"/>
        <end position="155"/>
    </location>
</feature>
<feature type="turn" evidence="2">
    <location>
        <begin position="156"/>
        <end position="158"/>
    </location>
</feature>
<feature type="helix" evidence="2">
    <location>
        <begin position="159"/>
        <end position="179"/>
    </location>
</feature>
<feature type="strand" evidence="2">
    <location>
        <begin position="182"/>
        <end position="186"/>
    </location>
</feature>
<feature type="turn" evidence="2">
    <location>
        <begin position="191"/>
        <end position="193"/>
    </location>
</feature>
<feature type="helix" evidence="2">
    <location>
        <begin position="194"/>
        <end position="220"/>
    </location>
</feature>
<feature type="strand" evidence="2">
    <location>
        <begin position="222"/>
        <end position="228"/>
    </location>
</feature>
<feature type="helix" evidence="2">
    <location>
        <begin position="234"/>
        <end position="245"/>
    </location>
</feature>
<feature type="helix" evidence="2">
    <location>
        <begin position="257"/>
        <end position="262"/>
    </location>
</feature>
<feature type="strand" evidence="2">
    <location>
        <begin position="263"/>
        <end position="266"/>
    </location>
</feature>
<feature type="strand" evidence="2">
    <location>
        <begin position="269"/>
        <end position="273"/>
    </location>
</feature>
<feature type="strand" evidence="2">
    <location>
        <begin position="302"/>
        <end position="309"/>
    </location>
</feature>
<feature type="turn" evidence="2">
    <location>
        <begin position="310"/>
        <end position="312"/>
    </location>
</feature>
<feature type="helix" evidence="2">
    <location>
        <begin position="316"/>
        <end position="325"/>
    </location>
</feature>
<feature type="strand" evidence="2">
    <location>
        <begin position="330"/>
        <end position="335"/>
    </location>
</feature>
<feature type="helix" evidence="2">
    <location>
        <begin position="342"/>
        <end position="344"/>
    </location>
</feature>
<feature type="strand" evidence="2">
    <location>
        <begin position="357"/>
        <end position="361"/>
    </location>
</feature>
<feature type="turn" evidence="2">
    <location>
        <begin position="362"/>
        <end position="365"/>
    </location>
</feature>
<feature type="helix" evidence="2">
    <location>
        <begin position="368"/>
        <end position="379"/>
    </location>
</feature>
<feature type="strand" evidence="2">
    <location>
        <begin position="382"/>
        <end position="386"/>
    </location>
</feature>
<feature type="helix" evidence="2">
    <location>
        <begin position="395"/>
        <end position="414"/>
    </location>
</feature>
<feature type="turn" evidence="2">
    <location>
        <begin position="415"/>
        <end position="418"/>
    </location>
</feature>
<feature type="helix" evidence="2">
    <location>
        <begin position="421"/>
        <end position="423"/>
    </location>
</feature>
<feature type="helix" evidence="2">
    <location>
        <begin position="425"/>
        <end position="439"/>
    </location>
</feature>
<feature type="strand" evidence="2">
    <location>
        <begin position="440"/>
        <end position="442"/>
    </location>
</feature>
<feature type="helix" evidence="2">
    <location>
        <begin position="445"/>
        <end position="453"/>
    </location>
</feature>
<protein>
    <recommendedName>
        <fullName evidence="1">tRNA modification GTPase MnmE</fullName>
        <ecNumber evidence="1">3.6.-.-</ecNumber>
    </recommendedName>
</protein>
<proteinExistence type="evidence at protein level"/>
<evidence type="ECO:0000255" key="1">
    <source>
        <dbReference type="HAMAP-Rule" id="MF_00379"/>
    </source>
</evidence>
<evidence type="ECO:0007829" key="2">
    <source>
        <dbReference type="PDB" id="3GEH"/>
    </source>
</evidence>
<comment type="function">
    <text evidence="1">Exhibits a very high intrinsic GTPase hydrolysis rate. Involved in the addition of a carboxymethylaminomethyl (cmnm) group at the wobble position (U34) of certain tRNAs, forming tRNA-cmnm(5)s(2)U34.</text>
</comment>
<comment type="cofactor">
    <cofactor evidence="1">
        <name>K(+)</name>
        <dbReference type="ChEBI" id="CHEBI:29103"/>
    </cofactor>
    <text evidence="1">Binds 1 potassium ion per subunit.</text>
</comment>
<comment type="subunit">
    <text evidence="1">Homodimer. Heterotetramer of two MnmE and two MnmG subunits.</text>
</comment>
<comment type="interaction">
    <interactant intactId="EBI-15808035">
        <id>Q8YN91</id>
    </interactant>
    <interactant intactId="EBI-15808035">
        <id>Q8YN91</id>
        <label>mnmE</label>
    </interactant>
    <organismsDiffer>false</organismsDiffer>
    <experiments>2</experiments>
</comment>
<comment type="subcellular location">
    <subcellularLocation>
        <location evidence="1">Cytoplasm</location>
    </subcellularLocation>
</comment>
<comment type="similarity">
    <text evidence="1">Belongs to the TRAFAC class TrmE-Era-EngA-EngB-Septin-like GTPase superfamily. TrmE GTPase family.</text>
</comment>
<dbReference type="EC" id="3.6.-.-" evidence="1"/>
<dbReference type="EMBL" id="BA000019">
    <property type="protein sequence ID" value="BAB76376.1"/>
    <property type="molecule type" value="Genomic_DNA"/>
</dbReference>
<dbReference type="PIR" id="AE2390">
    <property type="entry name" value="AE2390"/>
</dbReference>
<dbReference type="PDB" id="3GEH">
    <property type="method" value="X-ray"/>
    <property type="resolution" value="3.20 A"/>
    <property type="chains" value="A=1-459"/>
</dbReference>
<dbReference type="PDBsum" id="3GEH"/>
<dbReference type="SMR" id="Q8YN91"/>
<dbReference type="DIP" id="DIP-48421N"/>
<dbReference type="STRING" id="103690.gene:10496730"/>
<dbReference type="KEGG" id="ana:all4677"/>
<dbReference type="eggNOG" id="COG0486">
    <property type="taxonomic scope" value="Bacteria"/>
</dbReference>
<dbReference type="EvolutionaryTrace" id="Q8YN91"/>
<dbReference type="Proteomes" id="UP000002483">
    <property type="component" value="Chromosome"/>
</dbReference>
<dbReference type="GO" id="GO:0005829">
    <property type="term" value="C:cytosol"/>
    <property type="evidence" value="ECO:0007669"/>
    <property type="project" value="TreeGrafter"/>
</dbReference>
<dbReference type="GO" id="GO:0005525">
    <property type="term" value="F:GTP binding"/>
    <property type="evidence" value="ECO:0007669"/>
    <property type="project" value="UniProtKB-UniRule"/>
</dbReference>
<dbReference type="GO" id="GO:0003924">
    <property type="term" value="F:GTPase activity"/>
    <property type="evidence" value="ECO:0007669"/>
    <property type="project" value="UniProtKB-UniRule"/>
</dbReference>
<dbReference type="GO" id="GO:0042802">
    <property type="term" value="F:identical protein binding"/>
    <property type="evidence" value="ECO:0000353"/>
    <property type="project" value="IntAct"/>
</dbReference>
<dbReference type="GO" id="GO:0046872">
    <property type="term" value="F:metal ion binding"/>
    <property type="evidence" value="ECO:0007669"/>
    <property type="project" value="UniProtKB-KW"/>
</dbReference>
<dbReference type="GO" id="GO:0030488">
    <property type="term" value="P:tRNA methylation"/>
    <property type="evidence" value="ECO:0007669"/>
    <property type="project" value="TreeGrafter"/>
</dbReference>
<dbReference type="GO" id="GO:0002098">
    <property type="term" value="P:tRNA wobble uridine modification"/>
    <property type="evidence" value="ECO:0007669"/>
    <property type="project" value="TreeGrafter"/>
</dbReference>
<dbReference type="CDD" id="cd04164">
    <property type="entry name" value="trmE"/>
    <property type="match status" value="1"/>
</dbReference>
<dbReference type="CDD" id="cd14858">
    <property type="entry name" value="TrmE_N"/>
    <property type="match status" value="1"/>
</dbReference>
<dbReference type="FunFam" id="3.30.1360.120:FF:000003">
    <property type="entry name" value="tRNA modification GTPase MnmE"/>
    <property type="match status" value="1"/>
</dbReference>
<dbReference type="FunFam" id="3.40.50.300:FF:000494">
    <property type="entry name" value="tRNA modification GTPase MnmE"/>
    <property type="match status" value="1"/>
</dbReference>
<dbReference type="Gene3D" id="3.40.50.300">
    <property type="entry name" value="P-loop containing nucleotide triphosphate hydrolases"/>
    <property type="match status" value="1"/>
</dbReference>
<dbReference type="Gene3D" id="3.30.1360.120">
    <property type="entry name" value="Probable tRNA modification gtpase trme, domain 1"/>
    <property type="match status" value="1"/>
</dbReference>
<dbReference type="Gene3D" id="1.20.120.430">
    <property type="entry name" value="tRNA modification GTPase MnmE domain 2"/>
    <property type="match status" value="1"/>
</dbReference>
<dbReference type="HAMAP" id="MF_00379">
    <property type="entry name" value="GTPase_MnmE"/>
    <property type="match status" value="1"/>
</dbReference>
<dbReference type="InterPro" id="IPR031168">
    <property type="entry name" value="G_TrmE"/>
</dbReference>
<dbReference type="InterPro" id="IPR006073">
    <property type="entry name" value="GTP-bd"/>
</dbReference>
<dbReference type="InterPro" id="IPR018948">
    <property type="entry name" value="GTP-bd_TrmE_N"/>
</dbReference>
<dbReference type="InterPro" id="IPR004520">
    <property type="entry name" value="GTPase_MnmE"/>
</dbReference>
<dbReference type="InterPro" id="IPR027368">
    <property type="entry name" value="MnmE_dom2"/>
</dbReference>
<dbReference type="InterPro" id="IPR025867">
    <property type="entry name" value="MnmE_helical"/>
</dbReference>
<dbReference type="InterPro" id="IPR027417">
    <property type="entry name" value="P-loop_NTPase"/>
</dbReference>
<dbReference type="InterPro" id="IPR005225">
    <property type="entry name" value="Small_GTP-bd"/>
</dbReference>
<dbReference type="InterPro" id="IPR027266">
    <property type="entry name" value="TrmE/GcvT_dom1"/>
</dbReference>
<dbReference type="NCBIfam" id="TIGR00450">
    <property type="entry name" value="mnmE_trmE_thdF"/>
    <property type="match status" value="1"/>
</dbReference>
<dbReference type="NCBIfam" id="NF003661">
    <property type="entry name" value="PRK05291.1-3"/>
    <property type="match status" value="1"/>
</dbReference>
<dbReference type="NCBIfam" id="TIGR00231">
    <property type="entry name" value="small_GTP"/>
    <property type="match status" value="1"/>
</dbReference>
<dbReference type="PANTHER" id="PTHR42714">
    <property type="entry name" value="TRNA MODIFICATION GTPASE GTPBP3"/>
    <property type="match status" value="1"/>
</dbReference>
<dbReference type="PANTHER" id="PTHR42714:SF2">
    <property type="entry name" value="TRNA MODIFICATION GTPASE GTPBP3, MITOCHONDRIAL"/>
    <property type="match status" value="1"/>
</dbReference>
<dbReference type="Pfam" id="PF01926">
    <property type="entry name" value="MMR_HSR1"/>
    <property type="match status" value="1"/>
</dbReference>
<dbReference type="Pfam" id="PF12631">
    <property type="entry name" value="MnmE_helical"/>
    <property type="match status" value="1"/>
</dbReference>
<dbReference type="Pfam" id="PF10396">
    <property type="entry name" value="TrmE_N"/>
    <property type="match status" value="1"/>
</dbReference>
<dbReference type="PRINTS" id="PR00449">
    <property type="entry name" value="RASTRNSFRMNG"/>
</dbReference>
<dbReference type="SUPFAM" id="SSF52540">
    <property type="entry name" value="P-loop containing nucleoside triphosphate hydrolases"/>
    <property type="match status" value="1"/>
</dbReference>
<dbReference type="SUPFAM" id="SSF116878">
    <property type="entry name" value="TrmE connector domain"/>
    <property type="match status" value="1"/>
</dbReference>
<dbReference type="PROSITE" id="PS51709">
    <property type="entry name" value="G_TRME"/>
    <property type="match status" value="1"/>
</dbReference>
<name>MNME_NOSS1</name>
<organism>
    <name type="scientific">Nostoc sp. (strain PCC 7120 / SAG 25.82 / UTEX 2576)</name>
    <dbReference type="NCBI Taxonomy" id="103690"/>
    <lineage>
        <taxon>Bacteria</taxon>
        <taxon>Bacillati</taxon>
        <taxon>Cyanobacteriota</taxon>
        <taxon>Cyanophyceae</taxon>
        <taxon>Nostocales</taxon>
        <taxon>Nostocaceae</taxon>
        <taxon>Nostoc</taxon>
    </lineage>
</organism>
<reference key="1">
    <citation type="journal article" date="2001" name="DNA Res.">
        <title>Complete genomic sequence of the filamentous nitrogen-fixing cyanobacterium Anabaena sp. strain PCC 7120.</title>
        <authorList>
            <person name="Kaneko T."/>
            <person name="Nakamura Y."/>
            <person name="Wolk C.P."/>
            <person name="Kuritz T."/>
            <person name="Sasamoto S."/>
            <person name="Watanabe A."/>
            <person name="Iriguchi M."/>
            <person name="Ishikawa A."/>
            <person name="Kawashima K."/>
            <person name="Kimura T."/>
            <person name="Kishida Y."/>
            <person name="Kohara M."/>
            <person name="Matsumoto M."/>
            <person name="Matsuno A."/>
            <person name="Muraki A."/>
            <person name="Nakazaki N."/>
            <person name="Shimpo S."/>
            <person name="Sugimoto M."/>
            <person name="Takazawa M."/>
            <person name="Yamada M."/>
            <person name="Yasuda M."/>
            <person name="Tabata S."/>
        </authorList>
    </citation>
    <scope>NUCLEOTIDE SEQUENCE [LARGE SCALE GENOMIC DNA]</scope>
    <source>
        <strain>PCC 7120 / SAG 25.82 / UTEX 2576</strain>
    </source>
</reference>
<accession>Q8YN91</accession>